<reference key="1">
    <citation type="journal article" date="1994" name="J. Bacteriol.">
        <title>Sequencing analysis reveals a unique gene organization in the gyrB region of Mycoplasma hominis.</title>
        <authorList>
            <person name="Ladefoged S.A."/>
            <person name="Christiansen G."/>
        </authorList>
    </citation>
    <scope>NUCLEOTIDE SEQUENCE [GENOMIC DNA]</scope>
</reference>
<reference key="2">
    <citation type="journal article" date="2009" name="PLoS Genet.">
        <title>Life on arginine for Mycoplasma hominis: clues from its minimal genome and comparison with other human urogenital mycoplasmas.</title>
        <authorList>
            <person name="Pereyre S."/>
            <person name="Sirand-Pugnet P."/>
            <person name="Beven L."/>
            <person name="Charron A."/>
            <person name="Renaudin H."/>
            <person name="Barre A."/>
            <person name="Avenaud P."/>
            <person name="Jacob D."/>
            <person name="Couloux A."/>
            <person name="Barbe V."/>
            <person name="de Daruvar A."/>
            <person name="Blanchard A."/>
            <person name="Bebear C."/>
        </authorList>
    </citation>
    <scope>NUCLEOTIDE SEQUENCE [LARGE SCALE GENOMIC DNA]</scope>
    <source>
        <strain>ATCC 23114 / DSM 25592 / NBRC 14850 / NCTC 10111 / PG21</strain>
    </source>
</reference>
<protein>
    <recommendedName>
        <fullName evidence="1">DNA gyrase subunit B</fullName>
        <ecNumber evidence="1">5.6.2.2</ecNumber>
    </recommendedName>
</protein>
<evidence type="ECO:0000255" key="1">
    <source>
        <dbReference type="HAMAP-Rule" id="MF_01898"/>
    </source>
</evidence>
<evidence type="ECO:0000305" key="2"/>
<name>GYRB_METH1</name>
<sequence>MDKIEEIHKYNADNIQILEGLEAVRKRPGMYIGSIGFKGLHHLLWEIVDNSVDEAMAGFATEIKIKLYPNNVIEVEDNGRGMPTGIHSGTKKSAVETILTVLHAGGKFDGSNYKVSGGLHGVGASVVNALSSEFEVWVKRDGKLHYQQFRNGGIPVKPLEVIGNVSEVETGTTIKFHPDYTIMEKENFDFDTIIDHSKQIAYLNKGLKITVENVEKNIIKVFCFEGGLIDYVKELNKGKKLIVPEVIYAEGVFNDKNFTNGQDVIVEVAMQYNEAYTNSIVSYANNIQTIDGGTHEQGFYDALVRIYNNYAETNKLFKTSSEKITREDVKEGLVAIISIKHTDPIFEGQTKGKLENKDARIATNKILSDSLERYLNENPEIARAIIEKCLLSQHTRLLEIKAREASRKGNGLDLGNLPGKLADCSSKNAEIRELFIVEGNSAGGSAKMGRDRSIQAILPLRGKVINAEKNSFASVLSNKEIATMIHALGTGINTEFDINKLKYHKIIIMTDADVDGAHITTLLLTFFYRYMKPLIEYGFVYLAQPPLYKITSGKNVEYAYNDLQKEQIMAKLEDKRNVAIQRYKGLGEMDPEQLWETTMDPETRKMLQVQIDDAAICDTVFATLMGEEIEPRHDFIQENAKYANNIDI</sequence>
<dbReference type="EC" id="5.6.2.2" evidence="1"/>
<dbReference type="EMBL" id="X77529">
    <property type="protein sequence ID" value="CAA54665.1"/>
    <property type="molecule type" value="Genomic_DNA"/>
</dbReference>
<dbReference type="EMBL" id="FP236530">
    <property type="protein sequence ID" value="CAX37511.1"/>
    <property type="molecule type" value="Genomic_DNA"/>
</dbReference>
<dbReference type="RefSeq" id="WP_012855650.1">
    <property type="nucleotide sequence ID" value="NC_013511.1"/>
</dbReference>
<dbReference type="SMR" id="P43053"/>
<dbReference type="STRING" id="347256.MHO_3760"/>
<dbReference type="PaxDb" id="347256-MHO_3760"/>
<dbReference type="KEGG" id="mho:MHO_3760"/>
<dbReference type="eggNOG" id="COG0187">
    <property type="taxonomic scope" value="Bacteria"/>
</dbReference>
<dbReference type="HOGENOM" id="CLU_006146_4_1_14"/>
<dbReference type="Proteomes" id="UP000002631">
    <property type="component" value="Chromosome"/>
</dbReference>
<dbReference type="GO" id="GO:0005694">
    <property type="term" value="C:chromosome"/>
    <property type="evidence" value="ECO:0007669"/>
    <property type="project" value="InterPro"/>
</dbReference>
<dbReference type="GO" id="GO:0005737">
    <property type="term" value="C:cytoplasm"/>
    <property type="evidence" value="ECO:0007669"/>
    <property type="project" value="UniProtKB-SubCell"/>
</dbReference>
<dbReference type="GO" id="GO:0005524">
    <property type="term" value="F:ATP binding"/>
    <property type="evidence" value="ECO:0007669"/>
    <property type="project" value="UniProtKB-UniRule"/>
</dbReference>
<dbReference type="GO" id="GO:0003677">
    <property type="term" value="F:DNA binding"/>
    <property type="evidence" value="ECO:0007669"/>
    <property type="project" value="UniProtKB-KW"/>
</dbReference>
<dbReference type="GO" id="GO:0034335">
    <property type="term" value="F:DNA negative supercoiling activity"/>
    <property type="evidence" value="ECO:0007669"/>
    <property type="project" value="UniProtKB-ARBA"/>
</dbReference>
<dbReference type="GO" id="GO:0046872">
    <property type="term" value="F:metal ion binding"/>
    <property type="evidence" value="ECO:0007669"/>
    <property type="project" value="UniProtKB-KW"/>
</dbReference>
<dbReference type="GO" id="GO:0006265">
    <property type="term" value="P:DNA topological change"/>
    <property type="evidence" value="ECO:0007669"/>
    <property type="project" value="UniProtKB-UniRule"/>
</dbReference>
<dbReference type="GO" id="GO:0006261">
    <property type="term" value="P:DNA-templated DNA replication"/>
    <property type="evidence" value="ECO:0007669"/>
    <property type="project" value="UniProtKB-UniRule"/>
</dbReference>
<dbReference type="CDD" id="cd16928">
    <property type="entry name" value="HATPase_GyrB-like"/>
    <property type="match status" value="1"/>
</dbReference>
<dbReference type="CDD" id="cd00822">
    <property type="entry name" value="TopoII_Trans_DNA_gyrase"/>
    <property type="match status" value="1"/>
</dbReference>
<dbReference type="FunFam" id="3.30.565.10:FF:000002">
    <property type="entry name" value="DNA gyrase subunit B"/>
    <property type="match status" value="1"/>
</dbReference>
<dbReference type="FunFam" id="3.40.50.670:FF:000002">
    <property type="entry name" value="DNA gyrase subunit B"/>
    <property type="match status" value="1"/>
</dbReference>
<dbReference type="Gene3D" id="3.30.230.10">
    <property type="match status" value="1"/>
</dbReference>
<dbReference type="Gene3D" id="3.40.50.670">
    <property type="match status" value="1"/>
</dbReference>
<dbReference type="Gene3D" id="3.30.565.10">
    <property type="entry name" value="Histidine kinase-like ATPase, C-terminal domain"/>
    <property type="match status" value="1"/>
</dbReference>
<dbReference type="HAMAP" id="MF_01898">
    <property type="entry name" value="GyrB"/>
    <property type="match status" value="1"/>
</dbReference>
<dbReference type="InterPro" id="IPR002288">
    <property type="entry name" value="DNA_gyrase_B_C"/>
</dbReference>
<dbReference type="InterPro" id="IPR011557">
    <property type="entry name" value="GyrB"/>
</dbReference>
<dbReference type="InterPro" id="IPR036890">
    <property type="entry name" value="HATPase_C_sf"/>
</dbReference>
<dbReference type="InterPro" id="IPR020568">
    <property type="entry name" value="Ribosomal_Su5_D2-typ_SF"/>
</dbReference>
<dbReference type="InterPro" id="IPR014721">
    <property type="entry name" value="Ribsml_uS5_D2-typ_fold_subgr"/>
</dbReference>
<dbReference type="InterPro" id="IPR001241">
    <property type="entry name" value="Topo_IIA"/>
</dbReference>
<dbReference type="InterPro" id="IPR013760">
    <property type="entry name" value="Topo_IIA-like_dom_sf"/>
</dbReference>
<dbReference type="InterPro" id="IPR000565">
    <property type="entry name" value="Topo_IIA_B"/>
</dbReference>
<dbReference type="InterPro" id="IPR013759">
    <property type="entry name" value="Topo_IIA_B_C"/>
</dbReference>
<dbReference type="InterPro" id="IPR013506">
    <property type="entry name" value="Topo_IIA_bsu_dom2"/>
</dbReference>
<dbReference type="InterPro" id="IPR018522">
    <property type="entry name" value="TopoIIA_CS"/>
</dbReference>
<dbReference type="InterPro" id="IPR006171">
    <property type="entry name" value="TOPRIM_dom"/>
</dbReference>
<dbReference type="NCBIfam" id="NF004189">
    <property type="entry name" value="PRK05644.1"/>
    <property type="match status" value="1"/>
</dbReference>
<dbReference type="PANTHER" id="PTHR45866:SF1">
    <property type="entry name" value="DNA GYRASE SUBUNIT B, MITOCHONDRIAL"/>
    <property type="match status" value="1"/>
</dbReference>
<dbReference type="PANTHER" id="PTHR45866">
    <property type="entry name" value="DNA GYRASE/TOPOISOMERASE SUBUNIT B"/>
    <property type="match status" value="1"/>
</dbReference>
<dbReference type="Pfam" id="PF00204">
    <property type="entry name" value="DNA_gyraseB"/>
    <property type="match status" value="1"/>
</dbReference>
<dbReference type="Pfam" id="PF00986">
    <property type="entry name" value="DNA_gyraseB_C"/>
    <property type="match status" value="1"/>
</dbReference>
<dbReference type="Pfam" id="PF02518">
    <property type="entry name" value="HATPase_c"/>
    <property type="match status" value="1"/>
</dbReference>
<dbReference type="Pfam" id="PF01751">
    <property type="entry name" value="Toprim"/>
    <property type="match status" value="1"/>
</dbReference>
<dbReference type="PRINTS" id="PR01159">
    <property type="entry name" value="DNAGYRASEB"/>
</dbReference>
<dbReference type="PRINTS" id="PR00418">
    <property type="entry name" value="TPI2FAMILY"/>
</dbReference>
<dbReference type="SMART" id="SM00387">
    <property type="entry name" value="HATPase_c"/>
    <property type="match status" value="1"/>
</dbReference>
<dbReference type="SMART" id="SM00433">
    <property type="entry name" value="TOP2c"/>
    <property type="match status" value="1"/>
</dbReference>
<dbReference type="SUPFAM" id="SSF55874">
    <property type="entry name" value="ATPase domain of HSP90 chaperone/DNA topoisomerase II/histidine kinase"/>
    <property type="match status" value="1"/>
</dbReference>
<dbReference type="SUPFAM" id="SSF54211">
    <property type="entry name" value="Ribosomal protein S5 domain 2-like"/>
    <property type="match status" value="1"/>
</dbReference>
<dbReference type="SUPFAM" id="SSF56719">
    <property type="entry name" value="Type II DNA topoisomerase"/>
    <property type="match status" value="1"/>
</dbReference>
<dbReference type="PROSITE" id="PS00177">
    <property type="entry name" value="TOPOISOMERASE_II"/>
    <property type="match status" value="1"/>
</dbReference>
<dbReference type="PROSITE" id="PS50880">
    <property type="entry name" value="TOPRIM"/>
    <property type="match status" value="1"/>
</dbReference>
<comment type="function">
    <text evidence="1">A type II topoisomerase that negatively supercoils closed circular double-stranded (ds) DNA in an ATP-dependent manner to modulate DNA topology and maintain chromosomes in an underwound state. Negative supercoiling favors strand separation, and DNA replication, transcription, recombination and repair, all of which involve strand separation. Also able to catalyze the interconversion of other topological isomers of dsDNA rings, including catenanes and knotted rings. Type II topoisomerases break and join 2 DNA strands simultaneously in an ATP-dependent manner.</text>
</comment>
<comment type="catalytic activity">
    <reaction evidence="1">
        <text>ATP-dependent breakage, passage and rejoining of double-stranded DNA.</text>
        <dbReference type="EC" id="5.6.2.2"/>
    </reaction>
</comment>
<comment type="cofactor">
    <cofactor evidence="1">
        <name>Mg(2+)</name>
        <dbReference type="ChEBI" id="CHEBI:18420"/>
    </cofactor>
    <cofactor evidence="1">
        <name>Mn(2+)</name>
        <dbReference type="ChEBI" id="CHEBI:29035"/>
    </cofactor>
    <cofactor evidence="1">
        <name>Ca(2+)</name>
        <dbReference type="ChEBI" id="CHEBI:29108"/>
    </cofactor>
    <text evidence="1">Binds two Mg(2+) per subunit. The magnesium ions form salt bridges with both the protein and the DNA. Can also accept other divalent metal cations, such as Mn(2+) or Ca(2+).</text>
</comment>
<comment type="subunit">
    <text evidence="1">Heterotetramer, composed of two GyrA and two GyrB chains. In the heterotetramer, GyrA contains the active site tyrosine that forms a transient covalent intermediate with DNA, while GyrB binds cofactors and catalyzes ATP hydrolysis.</text>
</comment>
<comment type="subcellular location">
    <subcellularLocation>
        <location evidence="1">Cytoplasm</location>
    </subcellularLocation>
</comment>
<comment type="miscellaneous">
    <text evidence="1">Few gyrases are as efficient as E.coli at forming negative supercoils. Not all organisms have 2 type II topoisomerases; in organisms with a single type II topoisomerase this enzyme also has to decatenate newly replicated chromosomes.</text>
</comment>
<comment type="similarity">
    <text evidence="1">Belongs to the type II topoisomerase GyrB family.</text>
</comment>
<keyword id="KW-0067">ATP-binding</keyword>
<keyword id="KW-0963">Cytoplasm</keyword>
<keyword id="KW-0238">DNA-binding</keyword>
<keyword id="KW-0413">Isomerase</keyword>
<keyword id="KW-0460">Magnesium</keyword>
<keyword id="KW-0479">Metal-binding</keyword>
<keyword id="KW-0547">Nucleotide-binding</keyword>
<keyword id="KW-1185">Reference proteome</keyword>
<keyword id="KW-0799">Topoisomerase</keyword>
<accession>P43053</accession>
<accession>D1J8G4</accession>
<proteinExistence type="inferred from homology"/>
<organism>
    <name type="scientific">Metamycoplasma hominis (strain ATCC 23114 / DSM 25592 / NBRC 14850 / NCTC 10111 / PG21)</name>
    <name type="common">Mycoplasma hominis</name>
    <dbReference type="NCBI Taxonomy" id="347256"/>
    <lineage>
        <taxon>Bacteria</taxon>
        <taxon>Bacillati</taxon>
        <taxon>Mycoplasmatota</taxon>
        <taxon>Mycoplasmoidales</taxon>
        <taxon>Metamycoplasmataceae</taxon>
        <taxon>Metamycoplasma</taxon>
    </lineage>
</organism>
<gene>
    <name evidence="1" type="primary">gyrB</name>
    <name type="ordered locus">MHO_3760</name>
</gene>
<feature type="chain" id="PRO_0000145320" description="DNA gyrase subunit B">
    <location>
        <begin position="1"/>
        <end position="648"/>
    </location>
</feature>
<feature type="domain" description="Toprim" evidence="1">
    <location>
        <begin position="432"/>
        <end position="546"/>
    </location>
</feature>
<feature type="binding site" evidence="1">
    <location>
        <position position="438"/>
    </location>
    <ligand>
        <name>Mg(2+)</name>
        <dbReference type="ChEBI" id="CHEBI:18420"/>
        <label>1</label>
        <note>catalytic</note>
    </ligand>
</feature>
<feature type="binding site" evidence="1">
    <location>
        <position position="511"/>
    </location>
    <ligand>
        <name>Mg(2+)</name>
        <dbReference type="ChEBI" id="CHEBI:18420"/>
        <label>1</label>
        <note>catalytic</note>
    </ligand>
</feature>
<feature type="binding site" evidence="1">
    <location>
        <position position="511"/>
    </location>
    <ligand>
        <name>Mg(2+)</name>
        <dbReference type="ChEBI" id="CHEBI:18420"/>
        <label>2</label>
    </ligand>
</feature>
<feature type="binding site" evidence="1">
    <location>
        <position position="513"/>
    </location>
    <ligand>
        <name>Mg(2+)</name>
        <dbReference type="ChEBI" id="CHEBI:18420"/>
        <label>2</label>
    </ligand>
</feature>
<feature type="site" description="Interaction with DNA" evidence="1">
    <location>
        <position position="463"/>
    </location>
</feature>
<feature type="site" description="Interaction with DNA" evidence="1">
    <location>
        <position position="466"/>
    </location>
</feature>
<feature type="sequence conflict" description="In Ref. 1; CAA54665." evidence="2" ref="1">
    <original>V</original>
    <variation>F</variation>
    <location>
        <position position="165"/>
    </location>
</feature>
<feature type="sequence conflict" description="In Ref. 1; CAA54665." evidence="2" ref="1">
    <original>D</original>
    <variation>F</variation>
    <location>
        <position position="189"/>
    </location>
</feature>